<accession>B4T5D8</accession>
<evidence type="ECO:0000255" key="1">
    <source>
        <dbReference type="HAMAP-Rule" id="MF_01065"/>
    </source>
</evidence>
<proteinExistence type="inferred from homology"/>
<keyword id="KW-1003">Cell membrane</keyword>
<keyword id="KW-0449">Lipoprotein</keyword>
<keyword id="KW-0472">Membrane</keyword>
<keyword id="KW-0564">Palmitate</keyword>
<keyword id="KW-0732">Signal</keyword>
<gene>
    <name evidence="1" type="primary">ynfC</name>
    <name type="ordered locus">SNSL254_A1612</name>
</gene>
<sequence length="236" mass="26202">MKKPLLLTLLCMILAGCDNPKSLESFTPEMASFSNEFDFDPLRGPVKDFSQTLMSENGEVAKQVTGTLSQEGCFDTLELHDLENNTGLALVLDANYYRDAQTLEKKVQLQGKCQLAALPSAGVTWETDDNGFVVSATGKEMKVEYRYDSEGYPLGKTTINSQNTLSVTAKPSADPRKKLDYTAVSRVDDRQVGNVTQSCEYDAYANPVDCRLVIVDESVKPAVSHHYTIKNRIDYY</sequence>
<feature type="signal peptide" evidence="1">
    <location>
        <begin position="1"/>
        <end position="16"/>
    </location>
</feature>
<feature type="chain" id="PRO_1000136560" description="UPF0257 lipoprotein YnfC">
    <location>
        <begin position="17"/>
        <end position="236"/>
    </location>
</feature>
<feature type="lipid moiety-binding region" description="N-palmitoyl cysteine" evidence="1">
    <location>
        <position position="17"/>
    </location>
</feature>
<feature type="lipid moiety-binding region" description="S-diacylglycerol cysteine" evidence="1">
    <location>
        <position position="17"/>
    </location>
</feature>
<dbReference type="EMBL" id="CP001113">
    <property type="protein sequence ID" value="ACF63567.1"/>
    <property type="molecule type" value="Genomic_DNA"/>
</dbReference>
<dbReference type="RefSeq" id="WP_000743122.1">
    <property type="nucleotide sequence ID" value="NZ_CCMR01000003.1"/>
</dbReference>
<dbReference type="SMR" id="B4T5D8"/>
<dbReference type="KEGG" id="see:SNSL254_A1612"/>
<dbReference type="HOGENOM" id="CLU_1174761_0_0_6"/>
<dbReference type="Proteomes" id="UP000008824">
    <property type="component" value="Chromosome"/>
</dbReference>
<dbReference type="GO" id="GO:0005886">
    <property type="term" value="C:plasma membrane"/>
    <property type="evidence" value="ECO:0007669"/>
    <property type="project" value="UniProtKB-SubCell"/>
</dbReference>
<dbReference type="HAMAP" id="MF_01065">
    <property type="entry name" value="UPF0257"/>
    <property type="match status" value="1"/>
</dbReference>
<dbReference type="InterPro" id="IPR010646">
    <property type="entry name" value="UPF0257"/>
</dbReference>
<dbReference type="NCBIfam" id="NF002798">
    <property type="entry name" value="PRK02939.1"/>
    <property type="match status" value="1"/>
</dbReference>
<dbReference type="Pfam" id="PF06788">
    <property type="entry name" value="UPF0257"/>
    <property type="match status" value="1"/>
</dbReference>
<dbReference type="PROSITE" id="PS51257">
    <property type="entry name" value="PROKAR_LIPOPROTEIN"/>
    <property type="match status" value="1"/>
</dbReference>
<comment type="subcellular location">
    <subcellularLocation>
        <location evidence="1">Cell membrane</location>
        <topology evidence="1">Lipid-anchor</topology>
    </subcellularLocation>
</comment>
<comment type="similarity">
    <text evidence="1">Belongs to the UPF0257 family.</text>
</comment>
<protein>
    <recommendedName>
        <fullName evidence="1">UPF0257 lipoprotein YnfC</fullName>
    </recommendedName>
</protein>
<reference key="1">
    <citation type="journal article" date="2011" name="J. Bacteriol.">
        <title>Comparative genomics of 28 Salmonella enterica isolates: evidence for CRISPR-mediated adaptive sublineage evolution.</title>
        <authorList>
            <person name="Fricke W.F."/>
            <person name="Mammel M.K."/>
            <person name="McDermott P.F."/>
            <person name="Tartera C."/>
            <person name="White D.G."/>
            <person name="Leclerc J.E."/>
            <person name="Ravel J."/>
            <person name="Cebula T.A."/>
        </authorList>
    </citation>
    <scope>NUCLEOTIDE SEQUENCE [LARGE SCALE GENOMIC DNA]</scope>
    <source>
        <strain>SL254</strain>
    </source>
</reference>
<name>YNFC_SALNS</name>
<organism>
    <name type="scientific">Salmonella newport (strain SL254)</name>
    <dbReference type="NCBI Taxonomy" id="423368"/>
    <lineage>
        <taxon>Bacteria</taxon>
        <taxon>Pseudomonadati</taxon>
        <taxon>Pseudomonadota</taxon>
        <taxon>Gammaproteobacteria</taxon>
        <taxon>Enterobacterales</taxon>
        <taxon>Enterobacteriaceae</taxon>
        <taxon>Salmonella</taxon>
    </lineage>
</organism>